<accession>Q5R8P3</accession>
<accession>Q5RFC0</accession>
<protein>
    <recommendedName>
        <fullName evidence="2">BBSome complex assembly protein BBS10</fullName>
    </recommendedName>
    <alternativeName>
        <fullName>Bardet-Biedl syndrome 10 protein homolog</fullName>
    </alternativeName>
</protein>
<proteinExistence type="evidence at transcript level"/>
<evidence type="ECO:0000250" key="1">
    <source>
        <dbReference type="UniProtKB" id="Q8TAM1"/>
    </source>
</evidence>
<evidence type="ECO:0000305" key="2"/>
<organism>
    <name type="scientific">Pongo abelii</name>
    <name type="common">Sumatran orangutan</name>
    <name type="synonym">Pongo pygmaeus abelii</name>
    <dbReference type="NCBI Taxonomy" id="9601"/>
    <lineage>
        <taxon>Eukaryota</taxon>
        <taxon>Metazoa</taxon>
        <taxon>Chordata</taxon>
        <taxon>Craniata</taxon>
        <taxon>Vertebrata</taxon>
        <taxon>Euteleostomi</taxon>
        <taxon>Mammalia</taxon>
        <taxon>Eutheria</taxon>
        <taxon>Euarchontoglires</taxon>
        <taxon>Primates</taxon>
        <taxon>Haplorrhini</taxon>
        <taxon>Catarrhini</taxon>
        <taxon>Hominidae</taxon>
        <taxon>Pongo</taxon>
    </lineage>
</organism>
<dbReference type="EMBL" id="CR857240">
    <property type="protein sequence ID" value="CAH89537.1"/>
    <property type="status" value="ALT_INIT"/>
    <property type="molecule type" value="mRNA"/>
</dbReference>
<dbReference type="EMBL" id="CR859708">
    <property type="protein sequence ID" value="CAH91867.1"/>
    <property type="molecule type" value="mRNA"/>
</dbReference>
<dbReference type="RefSeq" id="NP_001126082.1">
    <property type="nucleotide sequence ID" value="NM_001132610.1"/>
</dbReference>
<dbReference type="FunCoup" id="Q5R8P3">
    <property type="interactions" value="412"/>
</dbReference>
<dbReference type="STRING" id="9601.ENSPPYP00000005455"/>
<dbReference type="GeneID" id="100173034"/>
<dbReference type="KEGG" id="pon:100173034"/>
<dbReference type="CTD" id="79738"/>
<dbReference type="eggNOG" id="KOG0357">
    <property type="taxonomic scope" value="Eukaryota"/>
</dbReference>
<dbReference type="eggNOG" id="KOG0360">
    <property type="taxonomic scope" value="Eukaryota"/>
</dbReference>
<dbReference type="InParanoid" id="Q5R8P3"/>
<dbReference type="OrthoDB" id="9393833at2759"/>
<dbReference type="Proteomes" id="UP000001595">
    <property type="component" value="Unplaced"/>
</dbReference>
<dbReference type="GO" id="GO:0005929">
    <property type="term" value="C:cilium"/>
    <property type="evidence" value="ECO:0007669"/>
    <property type="project" value="UniProtKB-SubCell"/>
</dbReference>
<dbReference type="GO" id="GO:0005524">
    <property type="term" value="F:ATP binding"/>
    <property type="evidence" value="ECO:0007669"/>
    <property type="project" value="UniProtKB-KW"/>
</dbReference>
<dbReference type="GO" id="GO:0051131">
    <property type="term" value="P:chaperone-mediated protein complex assembly"/>
    <property type="evidence" value="ECO:0007669"/>
    <property type="project" value="InterPro"/>
</dbReference>
<dbReference type="FunFam" id="1.10.560.10:FF:000040">
    <property type="entry name" value="Bardet-Biedl syndrome 10 protein"/>
    <property type="match status" value="1"/>
</dbReference>
<dbReference type="FunFam" id="1.10.560.10:FF:000050">
    <property type="entry name" value="Bardet-Biedl syndrome 10 protein"/>
    <property type="match status" value="1"/>
</dbReference>
<dbReference type="FunFam" id="3.50.7.10:FF:000017">
    <property type="entry name" value="Bardet-Biedl syndrome 10 protein"/>
    <property type="match status" value="1"/>
</dbReference>
<dbReference type="Gene3D" id="3.50.7.10">
    <property type="entry name" value="GroEL"/>
    <property type="match status" value="1"/>
</dbReference>
<dbReference type="Gene3D" id="1.10.560.10">
    <property type="entry name" value="GroEL-like equatorial domain"/>
    <property type="match status" value="2"/>
</dbReference>
<dbReference type="Gene3D" id="3.30.260.10">
    <property type="entry name" value="TCP-1-like chaperonin intermediate domain"/>
    <property type="match status" value="1"/>
</dbReference>
<dbReference type="InterPro" id="IPR042619">
    <property type="entry name" value="BBS10"/>
</dbReference>
<dbReference type="InterPro" id="IPR002423">
    <property type="entry name" value="Cpn60/GroEL/TCP-1"/>
</dbReference>
<dbReference type="InterPro" id="IPR027409">
    <property type="entry name" value="GroEL-like_apical_dom_sf"/>
</dbReference>
<dbReference type="InterPro" id="IPR027413">
    <property type="entry name" value="GROEL-like_equatorial_sf"/>
</dbReference>
<dbReference type="InterPro" id="IPR027410">
    <property type="entry name" value="TCP-1-like_intermed_sf"/>
</dbReference>
<dbReference type="PANTHER" id="PTHR14667">
    <property type="entry name" value="BARDET-BIEDL SYNDROME 10 PROTEIN"/>
    <property type="match status" value="1"/>
</dbReference>
<dbReference type="PANTHER" id="PTHR14667:SF2">
    <property type="entry name" value="BARDET-BIEDL SYNDROME 10 PROTEIN"/>
    <property type="match status" value="1"/>
</dbReference>
<dbReference type="Pfam" id="PF00118">
    <property type="entry name" value="Cpn60_TCP1"/>
    <property type="match status" value="1"/>
</dbReference>
<dbReference type="SUPFAM" id="SSF48592">
    <property type="entry name" value="GroEL equatorial domain-like"/>
    <property type="match status" value="1"/>
</dbReference>
<keyword id="KW-0067">ATP-binding</keyword>
<keyword id="KW-0966">Cell projection</keyword>
<keyword id="KW-0143">Chaperone</keyword>
<keyword id="KW-0969">Cilium</keyword>
<keyword id="KW-0547">Nucleotide-binding</keyword>
<keyword id="KW-1185">Reference proteome</keyword>
<comment type="function">
    <text evidence="1">Probable molecular chaperone that assists the folding of proteins upon ATP hydrolysis. Plays a role in the assembly of BBSome, a complex involved in ciliogenesis regulating transports vesicles to the cilia. Involved in adipogenic differentiation.</text>
</comment>
<comment type="subunit">
    <text evidence="1">Component of a complex composed at least of MKKS, BBS10, BBS12, TCP1, CCT2, CCT3, CCT4, CCT5 and CCT8.</text>
</comment>
<comment type="subcellular location">
    <subcellularLocation>
        <location evidence="1">Cell projection</location>
        <location evidence="1">Cilium</location>
    </subcellularLocation>
    <text evidence="1">Located within the basal body of the primary cilium of differentiating preadipocytes.</text>
</comment>
<comment type="similarity">
    <text evidence="2">Belongs to the TCP-1 chaperonin family.</text>
</comment>
<comment type="sequence caution" evidence="2">
    <conflict type="erroneous initiation">
        <sequence resource="EMBL-CDS" id="CAH89537"/>
    </conflict>
</comment>
<reference key="1">
    <citation type="submission" date="2004-11" db="EMBL/GenBank/DDBJ databases">
        <authorList>
            <consortium name="The German cDNA consortium"/>
        </authorList>
    </citation>
    <scope>NUCLEOTIDE SEQUENCE [LARGE SCALE MRNA]</scope>
    <source>
        <tissue>Kidney</tissue>
    </source>
</reference>
<gene>
    <name type="primary">BBS10</name>
</gene>
<feature type="chain" id="PRO_0000235274" description="BBSome complex assembly protein BBS10">
    <location>
        <begin position="1"/>
        <end position="723"/>
    </location>
</feature>
<feature type="sequence conflict" description="In Ref. 1; CAH89537." evidence="2" ref="1">
    <original>T</original>
    <variation>A</variation>
    <location>
        <position position="42"/>
    </location>
</feature>
<feature type="sequence conflict" description="In Ref. 1; CAH89537." evidence="2" ref="1">
    <original>A</original>
    <variation>T</variation>
    <location>
        <position position="296"/>
    </location>
</feature>
<feature type="sequence conflict" description="In Ref. 1; CAH89537." evidence="2" ref="1">
    <original>Q</original>
    <variation>R</variation>
    <location>
        <position position="359"/>
    </location>
</feature>
<feature type="sequence conflict" description="In Ref. 1; CAH89537." evidence="2" ref="1">
    <original>P</original>
    <variation>S</variation>
    <location>
        <position position="624"/>
    </location>
</feature>
<feature type="sequence conflict" description="In Ref. 1; CAH89537." evidence="2" ref="1">
    <original>T</original>
    <variation>A</variation>
    <location>
        <position position="696"/>
    </location>
</feature>
<sequence length="723" mass="80596">MLSSMVAAGSVKAALQVAEVLEAIVSCCVGPEGRQVLCTKPTGEVLLSRNGGRLLEALHLEHPIARMIVDCVSSHLKKTGDGAKTFIIFLCHLLRGLHAITDSEKDPLMCENIQTHGRHWKNCSQWKCISQALLTFQTQILDGIMDQYLSRHFLSIFSSAKEKTLCRSSLELLLEAYFCGRVGRNNHKFISQLMCDYFFKCMTCESGIGVFELVDDYFVELNVGVTGLPVSDSRIIAGLVLQKDFSVYCPADGDIRMVIVTETVQPLFSTSGSEFILNSEAQFQTSQFWIMEKTQAIMKHLHSQNVKLLISSVKQPDLVIYYAGVNGISVVECLSSEEVSLIRRIIGLSPFVPPQAFSQCEIPNTALVKFCKPLILRSKRYVHLGLISTCAFIPHSIVLCGPLQGLIEQHEDALHGAFKMLRQLFKDLDLSYITQTNDQNGTSSLFIYKNSGESYQAPDTGNGSIQRPYQDTVVENKDELEKTQTYLKVHSNLVISDVELETYIPYSTPTLTPTDTFQTVETLTCLSLERNRLTDYYEPLLKNNSTAYSTRGNRIEISYENLQVTNITGKGSMLPVSCKLQNMGTSQSYLSSSMPAGCVLPVGGNFEILLHYYLLNYAKKCHQPEETMVSMIIANALLGIPKVLYKSKTGKYSFPHTYIRAVHALQTNQPLVSSQTGLESVTGKYQLLTSVLQCLTKILTIDVVITVKRDPQKVHNQDSEDEL</sequence>
<name>BBS10_PONAB</name>